<evidence type="ECO:0000255" key="1">
    <source>
        <dbReference type="PROSITE-ProRule" id="PRU00037"/>
    </source>
</evidence>
<evidence type="ECO:0000255" key="2">
    <source>
        <dbReference type="PROSITE-ProRule" id="PRU00042"/>
    </source>
</evidence>
<evidence type="ECO:0000256" key="3">
    <source>
        <dbReference type="SAM" id="MobiDB-lite"/>
    </source>
</evidence>
<evidence type="ECO:0000269" key="4">
    <source>
    </source>
</evidence>
<evidence type="ECO:0000269" key="5">
    <source>
    </source>
</evidence>
<evidence type="ECO:0000269" key="6">
    <source>
    </source>
</evidence>
<evidence type="ECO:0000269" key="7">
    <source>
    </source>
</evidence>
<evidence type="ECO:0000305" key="8"/>
<feature type="chain" id="PRO_0000046990" description="Transcriptional regulator Kaiso">
    <location>
        <begin position="1"/>
        <end position="701"/>
    </location>
</feature>
<feature type="domain" description="BTB" evidence="1">
    <location>
        <begin position="32"/>
        <end position="94"/>
    </location>
</feature>
<feature type="zinc finger region" description="C2H2-type 1" evidence="2">
    <location>
        <begin position="501"/>
        <end position="523"/>
    </location>
</feature>
<feature type="zinc finger region" description="C2H2-type 2" evidence="2">
    <location>
        <begin position="529"/>
        <end position="551"/>
    </location>
</feature>
<feature type="zinc finger region" description="C2H2-type 3" evidence="2">
    <location>
        <begin position="557"/>
        <end position="580"/>
    </location>
</feature>
<feature type="region of interest" description="Disordered" evidence="3">
    <location>
        <begin position="128"/>
        <end position="158"/>
    </location>
</feature>
<feature type="region of interest" description="Disordered" evidence="3">
    <location>
        <begin position="181"/>
        <end position="311"/>
    </location>
</feature>
<feature type="region of interest" description="Required for methylation dependent DNA-binding">
    <location>
        <begin position="470"/>
        <end position="609"/>
    </location>
</feature>
<feature type="region of interest" description="Required for sequence specific DNA-binding">
    <location>
        <begin position="519"/>
        <end position="701"/>
    </location>
</feature>
<feature type="region of interest" description="Disordered" evidence="3">
    <location>
        <begin position="644"/>
        <end position="664"/>
    </location>
</feature>
<feature type="compositionally biased region" description="Polar residues" evidence="3">
    <location>
        <begin position="245"/>
        <end position="258"/>
    </location>
</feature>
<feature type="compositionally biased region" description="Low complexity" evidence="3">
    <location>
        <begin position="259"/>
        <end position="273"/>
    </location>
</feature>
<feature type="compositionally biased region" description="Polar residues" evidence="3">
    <location>
        <begin position="278"/>
        <end position="311"/>
    </location>
</feature>
<feature type="compositionally biased region" description="Polar residues" evidence="3">
    <location>
        <begin position="652"/>
        <end position="664"/>
    </location>
</feature>
<feature type="mutagenesis site" description="Abrogates interaction with NCOR1 and transcriptional repression; when associated with Q-47." evidence="7">
    <original>D</original>
    <variation>N</variation>
    <location>
        <position position="33"/>
    </location>
</feature>
<feature type="mutagenesis site" description="Abrogates interaction with NCOR1 and transcriptional repression; when associated with N-33." evidence="7">
    <original>R</original>
    <variation>Q</variation>
    <location>
        <position position="47"/>
    </location>
</feature>
<feature type="sequence conflict" description="In Ref. 1; AAL66228." evidence="8" ref="1">
    <original>I</original>
    <variation>L</variation>
    <location>
        <position position="333"/>
    </location>
</feature>
<accession>Q8UVQ4</accession>
<accession>Q90X05</accession>
<name>KAISO_XENLA</name>
<sequence length="701" mass="77347">METKKLITATDTQYSGILLNALNDQRIQGLYCDVTVIVEDRKFRAHRNILSACSTYFHQLFSVAGQVVELNFVKADIFAEILNYIYSSKIVRVRCDMLEELIKSGKLLGVPFIAELGIPLSQVKSISGAGGKDGGTDAPSNPDHKAPEPQKSSDSPLPCTVKIKADVKTEMPVITESFSLSSDDYKDKKASGSQDHNSEKEDDDDDVIFCSEIVSSKQAPAERKEAAQTQIPPDNEQVPEVKKVTPSSQVQLTQNSLPTNQQSSKNTSSTTQKFTPPVNANISKNPTPAANGFLSPTAQKQGTPNAVQNQHSQNITSGNALPQQKPVVNFSSIKPQQISAIKPKTEVIIHGNGLSPPSSSVIPLGQQPVTPKHISFDGVQKKQVVTFTQGSPSKPGEFKIKIADVVSGSSLDSFKDSEPRRIIDGKKIITLDTASEIEGLSTGCKVYANIGEDTYDIVIPIKEDPEEGEAKLDLDGLPNRKRMKLKHDDHYELIVDGRVYYICIVCKRSYVCLTSLRRHFNVHSWEKKYPCRYCERVFPLAEYRTKHEIHHTGERRYQCLTCGSSFINYQVMASHIRSVHSLDPSGDSKLYRLNPCKTLQIRQYAYVNNSTNGTVINDGAINVPVITDGGINVPVINDGGIVYDIDPDEPQQPASEGNHANSATKPVNWDNIFIQQSNQNMFKLNTSEGGTEFEFVIPESY</sequence>
<comment type="function">
    <text evidence="4 5 6 7">Transcriptional regulator with bimodal DNA-binding specificity. Binds to methylated CpG dinucleotides in the consensus sequence 5'-CGCG-3' and also binds to the non-methylated consensus sequence 5'-CTGCNA-3'. May recruit the N-CoR repressor complex to promote histone deacetylation and the formation of repressive chromatin structures in target gene promoters. Contributes to the repression of target genes of the Wnt signaling pathway and to the methylation-dependent repression of zygotic transcription prior to the mid-blastula transition (MBT). Also required for gastrulation movements.</text>
</comment>
<comment type="subunit">
    <text evidence="4 7">Self associates. Interacts with tcf7l1-A, leading to repression of tcf7l1-A target genes. Interacts with ctnnd1, and this interaction may inhibit DNA-binding. Interacts with ncor1.</text>
</comment>
<comment type="interaction">
    <interactant intactId="EBI-6261609">
        <id>Q8UVQ4</id>
    </interactant>
    <interactant intactId="EBI-6260685">
        <id>Q8AXM9</id>
        <label>ctnnd1</label>
    </interactant>
    <organismsDiffer>false</organismsDiffer>
    <experiments>2</experiments>
</comment>
<comment type="subcellular location">
    <subcellularLocation>
        <location>Nucleus</location>
    </subcellularLocation>
</comment>
<comment type="developmental stage">
    <text evidence="4">Expressed maternally and throughout development. Expressed in the animal hemisphere of eggs and cleavage stage embryos. Expressed in the ectodermal region of blastula and gastrula stage embryos and in the anterior and dorsal regions of neurula stage embryos. Expressed in the brain, ear, eye, branchial arches and spinal cord of tailbud stage embryos.</text>
</comment>
<organism>
    <name type="scientific">Xenopus laevis</name>
    <name type="common">African clawed frog</name>
    <dbReference type="NCBI Taxonomy" id="8355"/>
    <lineage>
        <taxon>Eukaryota</taxon>
        <taxon>Metazoa</taxon>
        <taxon>Chordata</taxon>
        <taxon>Craniata</taxon>
        <taxon>Vertebrata</taxon>
        <taxon>Euteleostomi</taxon>
        <taxon>Amphibia</taxon>
        <taxon>Batrachia</taxon>
        <taxon>Anura</taxon>
        <taxon>Pipoidea</taxon>
        <taxon>Pipidae</taxon>
        <taxon>Xenopodinae</taxon>
        <taxon>Xenopus</taxon>
        <taxon>Xenopus</taxon>
    </lineage>
</organism>
<keyword id="KW-0217">Developmental protein</keyword>
<keyword id="KW-0238">DNA-binding</keyword>
<keyword id="KW-0479">Metal-binding</keyword>
<keyword id="KW-0539">Nucleus</keyword>
<keyword id="KW-1185">Reference proteome</keyword>
<keyword id="KW-0677">Repeat</keyword>
<keyword id="KW-0678">Repressor</keyword>
<keyword id="KW-0804">Transcription</keyword>
<keyword id="KW-0805">Transcription regulation</keyword>
<keyword id="KW-0879">Wnt signaling pathway</keyword>
<keyword id="KW-0862">Zinc</keyword>
<keyword id="KW-0863">Zinc-finger</keyword>
<dbReference type="EMBL" id="AF420316">
    <property type="protein sequence ID" value="AAL66228.1"/>
    <property type="molecule type" value="mRNA"/>
</dbReference>
<dbReference type="EMBL" id="AY044336">
    <property type="protein sequence ID" value="AAK95689.1"/>
    <property type="molecule type" value="mRNA"/>
</dbReference>
<dbReference type="EMBL" id="BC070994">
    <property type="protein sequence ID" value="AAH70994.1"/>
    <property type="molecule type" value="mRNA"/>
</dbReference>
<dbReference type="RefSeq" id="NP_001082143.1">
    <property type="nucleotide sequence ID" value="NM_001088674.1"/>
</dbReference>
<dbReference type="SMR" id="Q8UVQ4"/>
<dbReference type="BioGRID" id="99582">
    <property type="interactions" value="3"/>
</dbReference>
<dbReference type="IntAct" id="Q8UVQ4">
    <property type="interactions" value="1"/>
</dbReference>
<dbReference type="GeneID" id="398248"/>
<dbReference type="KEGG" id="xla:398248"/>
<dbReference type="AGR" id="Xenbase:XB-GENE-865623"/>
<dbReference type="CTD" id="398248"/>
<dbReference type="Xenbase" id="XB-GENE-865623">
    <property type="gene designation" value="zbtb33.S"/>
</dbReference>
<dbReference type="OrthoDB" id="6359816at2759"/>
<dbReference type="Proteomes" id="UP000186698">
    <property type="component" value="Chromosome 8S"/>
</dbReference>
<dbReference type="Bgee" id="398248">
    <property type="expression patterns" value="Expressed in blastula and 18 other cell types or tissues"/>
</dbReference>
<dbReference type="GO" id="GO:0005634">
    <property type="term" value="C:nucleus"/>
    <property type="evidence" value="ECO:0000305"/>
    <property type="project" value="UniProtKB"/>
</dbReference>
<dbReference type="GO" id="GO:0008013">
    <property type="term" value="F:beta-catenin binding"/>
    <property type="evidence" value="ECO:0000314"/>
    <property type="project" value="UniProtKB"/>
</dbReference>
<dbReference type="GO" id="GO:0000981">
    <property type="term" value="F:DNA-binding transcription factor activity, RNA polymerase II-specific"/>
    <property type="evidence" value="ECO:0000318"/>
    <property type="project" value="GO_Central"/>
</dbReference>
<dbReference type="GO" id="GO:0008327">
    <property type="term" value="F:methyl-CpG binding"/>
    <property type="evidence" value="ECO:0000314"/>
    <property type="project" value="UniProtKB"/>
</dbReference>
<dbReference type="GO" id="GO:0000978">
    <property type="term" value="F:RNA polymerase II cis-regulatory region sequence-specific DNA binding"/>
    <property type="evidence" value="ECO:0000318"/>
    <property type="project" value="GO_Central"/>
</dbReference>
<dbReference type="GO" id="GO:0043565">
    <property type="term" value="F:sequence-specific DNA binding"/>
    <property type="evidence" value="ECO:0000314"/>
    <property type="project" value="UniProtKB"/>
</dbReference>
<dbReference type="GO" id="GO:0000976">
    <property type="term" value="F:transcription cis-regulatory region binding"/>
    <property type="evidence" value="ECO:0000314"/>
    <property type="project" value="UniProtKB"/>
</dbReference>
<dbReference type="GO" id="GO:0008270">
    <property type="term" value="F:zinc ion binding"/>
    <property type="evidence" value="ECO:0007669"/>
    <property type="project" value="UniProtKB-KW"/>
</dbReference>
<dbReference type="GO" id="GO:0042074">
    <property type="term" value="P:cell migration involved in gastrulation"/>
    <property type="evidence" value="ECO:0000315"/>
    <property type="project" value="UniProtKB"/>
</dbReference>
<dbReference type="GO" id="GO:0045892">
    <property type="term" value="P:negative regulation of DNA-templated transcription"/>
    <property type="evidence" value="ECO:0000314"/>
    <property type="project" value="UniProtKB"/>
</dbReference>
<dbReference type="GO" id="GO:0000122">
    <property type="term" value="P:negative regulation of transcription by RNA polymerase II"/>
    <property type="evidence" value="ECO:0000314"/>
    <property type="project" value="UniProtKB"/>
</dbReference>
<dbReference type="GO" id="GO:0030178">
    <property type="term" value="P:negative regulation of Wnt signaling pathway"/>
    <property type="evidence" value="ECO:0000316"/>
    <property type="project" value="UniProtKB"/>
</dbReference>
<dbReference type="GO" id="GO:0006357">
    <property type="term" value="P:regulation of transcription by RNA polymerase II"/>
    <property type="evidence" value="ECO:0000318"/>
    <property type="project" value="GO_Central"/>
</dbReference>
<dbReference type="GO" id="GO:0016055">
    <property type="term" value="P:Wnt signaling pathway"/>
    <property type="evidence" value="ECO:0007669"/>
    <property type="project" value="UniProtKB-KW"/>
</dbReference>
<dbReference type="CDD" id="cd18219">
    <property type="entry name" value="BTB_POZ_ZBTB33_KAISO"/>
    <property type="match status" value="1"/>
</dbReference>
<dbReference type="FunFam" id="3.30.160.60:FF:000749">
    <property type="entry name" value="Transcriptional regulator Kaiso"/>
    <property type="match status" value="1"/>
</dbReference>
<dbReference type="FunFam" id="3.30.160.60:FF:001008">
    <property type="entry name" value="transcriptional regulator Kaiso isoform X1"/>
    <property type="match status" value="1"/>
</dbReference>
<dbReference type="FunFam" id="3.30.710.10:FF:000077">
    <property type="entry name" value="transcriptional regulator Kaiso isoform X1"/>
    <property type="match status" value="1"/>
</dbReference>
<dbReference type="FunFam" id="3.30.160.60:FF:000235">
    <property type="entry name" value="Zinc finger and BTB domain containing 38"/>
    <property type="match status" value="1"/>
</dbReference>
<dbReference type="Gene3D" id="3.30.160.60">
    <property type="entry name" value="Classic Zinc Finger"/>
    <property type="match status" value="2"/>
</dbReference>
<dbReference type="Gene3D" id="3.30.710.10">
    <property type="entry name" value="Potassium Channel Kv1.1, Chain A"/>
    <property type="match status" value="1"/>
</dbReference>
<dbReference type="InterPro" id="IPR000210">
    <property type="entry name" value="BTB/POZ_dom"/>
</dbReference>
<dbReference type="InterPro" id="IPR011333">
    <property type="entry name" value="SKP1/BTB/POZ_sf"/>
</dbReference>
<dbReference type="InterPro" id="IPR036236">
    <property type="entry name" value="Znf_C2H2_sf"/>
</dbReference>
<dbReference type="InterPro" id="IPR013087">
    <property type="entry name" value="Znf_C2H2_type"/>
</dbReference>
<dbReference type="InterPro" id="IPR050457">
    <property type="entry name" value="ZnFinger_BTB_dom_contain"/>
</dbReference>
<dbReference type="PANTHER" id="PTHR46105">
    <property type="entry name" value="AGAP004733-PA"/>
    <property type="match status" value="1"/>
</dbReference>
<dbReference type="PANTHER" id="PTHR46105:SF27">
    <property type="entry name" value="TRANSCRIPTIONAL REGULATOR KAISO"/>
    <property type="match status" value="1"/>
</dbReference>
<dbReference type="Pfam" id="PF00651">
    <property type="entry name" value="BTB"/>
    <property type="match status" value="1"/>
</dbReference>
<dbReference type="SMART" id="SM00225">
    <property type="entry name" value="BTB"/>
    <property type="match status" value="1"/>
</dbReference>
<dbReference type="SMART" id="SM00355">
    <property type="entry name" value="ZnF_C2H2"/>
    <property type="match status" value="3"/>
</dbReference>
<dbReference type="SUPFAM" id="SSF57667">
    <property type="entry name" value="beta-beta-alpha zinc fingers"/>
    <property type="match status" value="2"/>
</dbReference>
<dbReference type="SUPFAM" id="SSF54695">
    <property type="entry name" value="POZ domain"/>
    <property type="match status" value="1"/>
</dbReference>
<dbReference type="PROSITE" id="PS50097">
    <property type="entry name" value="BTB"/>
    <property type="match status" value="1"/>
</dbReference>
<dbReference type="PROSITE" id="PS00028">
    <property type="entry name" value="ZINC_FINGER_C2H2_1"/>
    <property type="match status" value="3"/>
</dbReference>
<dbReference type="PROSITE" id="PS50157">
    <property type="entry name" value="ZINC_FINGER_C2H2_2"/>
    <property type="match status" value="3"/>
</dbReference>
<protein>
    <recommendedName>
        <fullName>Transcriptional regulator Kaiso</fullName>
    </recommendedName>
    <alternativeName>
        <fullName>Zinc finger and BTB domain-containing protein 33</fullName>
        <shortName>xKaiso</shortName>
    </alternativeName>
</protein>
<gene>
    <name type="primary">zbtb33</name>
    <name type="synonym">kaiso</name>
</gene>
<reference key="1">
    <citation type="journal article" date="2002" name="J. Biol. Chem.">
        <title>Isolation and characterization of XKaiso, a transcriptional repressor that associates with the catenin Xp120(ctn) in Xenopus laevis.</title>
        <authorList>
            <person name="Kim S.-W."/>
            <person name="Fang X."/>
            <person name="Ji H."/>
            <person name="Paulson A.F."/>
            <person name="Daniel J.M."/>
            <person name="Ciesiolka M."/>
            <person name="van Roy F."/>
            <person name="McCrea P.D."/>
        </authorList>
    </citation>
    <scope>NUCLEOTIDE SEQUENCE [MRNA]</scope>
    <scope>FUNCTION</scope>
    <scope>SELF-ASSOCIATION</scope>
    <scope>INTERACTION WITH CTNND1</scope>
    <scope>DEVELOPMENTAL STAGE</scope>
</reference>
<reference key="2">
    <citation type="journal article" date="2004" name="Development">
        <title>Kaiso is a genome-wide repressor of transcription that is essential for amphibian development.</title>
        <authorList>
            <person name="Ruzov A."/>
            <person name="Dunican D.S."/>
            <person name="Prokhortchouk A."/>
            <person name="Pennings S."/>
            <person name="Stancheva I."/>
            <person name="Prokhortchouk E."/>
            <person name="Meehan R.R."/>
        </authorList>
    </citation>
    <scope>NUCLEOTIDE SEQUENCE [MRNA]</scope>
    <scope>FUNCTION</scope>
    <scope>DNA-BINDING</scope>
    <source>
        <tissue>Lung</tissue>
    </source>
</reference>
<reference key="3">
    <citation type="submission" date="2004-05" db="EMBL/GenBank/DDBJ databases">
        <authorList>
            <consortium name="NIH - Xenopus Gene Collection (XGC) project"/>
        </authorList>
    </citation>
    <scope>NUCLEOTIDE SEQUENCE [LARGE SCALE MRNA]</scope>
    <source>
        <tissue>Lung</tissue>
    </source>
</reference>
<reference key="4">
    <citation type="journal article" date="2004" name="Nat. Cell Biol.">
        <title>Non-canonical Wnt signals are modulated by the Kaiso transcriptional repressor and p120-catenin.</title>
        <authorList>
            <person name="Kim S.-W."/>
            <person name="Park J.-I."/>
            <person name="Spring C.M."/>
            <person name="Sater A.K."/>
            <person name="Ji H."/>
            <person name="Otchere A.A."/>
            <person name="Daniel J.M."/>
            <person name="McCrea P.D."/>
        </authorList>
    </citation>
    <scope>FUNCTION</scope>
    <scope>DNA-BINDING</scope>
</reference>
<reference key="5">
    <citation type="journal article" date="2005" name="Dev. Cell">
        <title>Kaiso/p120-catenin and TCF/beta-catenin complexes coordinately regulate canonical Wnt gene targets.</title>
        <authorList>
            <person name="Park J.-I."/>
            <person name="Kim S.-W."/>
            <person name="Lyons J.P."/>
            <person name="Ji H."/>
            <person name="Nguyen T.T."/>
            <person name="Cho K."/>
            <person name="Barton M.C."/>
            <person name="Deroo T."/>
            <person name="Vleminckx K."/>
            <person name="Moon R.T."/>
            <person name="McCrea P.D."/>
        </authorList>
    </citation>
    <scope>FUNCTION</scope>
    <scope>DNA-BINDING</scope>
    <scope>SELF-ASSOCIATION</scope>
    <scope>INTERACTION WITH NCOR1 AND TCF7L1-A</scope>
    <scope>MUTAGENESIS OF ASP-33 AND ARG-47</scope>
</reference>
<reference key="6">
    <citation type="journal article" date="2005" name="Dev. Cell">
        <authorList>
            <person name="Park J.-I."/>
            <person name="Kim S.-W."/>
            <person name="Lyons J.P."/>
            <person name="Ji H."/>
            <person name="Nguyen T.T."/>
            <person name="Cho K."/>
            <person name="Barton M.C."/>
            <person name="Deroo T."/>
            <person name="Vleminckx K."/>
            <person name="Moon R.T."/>
            <person name="McCrea P.D."/>
        </authorList>
    </citation>
    <scope>ERRATUM OF PUBMED:15935774</scope>
</reference>
<proteinExistence type="evidence at protein level"/>